<evidence type="ECO:0000255" key="1">
    <source>
        <dbReference type="HAMAP-Rule" id="MF_00083"/>
    </source>
</evidence>
<keyword id="KW-0963">Cytoplasm</keyword>
<keyword id="KW-0378">Hydrolase</keyword>
<keyword id="KW-1185">Reference proteome</keyword>
<keyword id="KW-0694">RNA-binding</keyword>
<keyword id="KW-0820">tRNA-binding</keyword>
<name>PTH_AKKM8</name>
<comment type="function">
    <text evidence="1">Hydrolyzes ribosome-free peptidyl-tRNAs (with 1 or more amino acids incorporated), which drop off the ribosome during protein synthesis, or as a result of ribosome stalling.</text>
</comment>
<comment type="function">
    <text evidence="1">Catalyzes the release of premature peptidyl moieties from peptidyl-tRNA molecules trapped in stalled 50S ribosomal subunits, and thus maintains levels of free tRNAs and 50S ribosomes.</text>
</comment>
<comment type="catalytic activity">
    <reaction evidence="1">
        <text>an N-acyl-L-alpha-aminoacyl-tRNA + H2O = an N-acyl-L-amino acid + a tRNA + H(+)</text>
        <dbReference type="Rhea" id="RHEA:54448"/>
        <dbReference type="Rhea" id="RHEA-COMP:10123"/>
        <dbReference type="Rhea" id="RHEA-COMP:13883"/>
        <dbReference type="ChEBI" id="CHEBI:15377"/>
        <dbReference type="ChEBI" id="CHEBI:15378"/>
        <dbReference type="ChEBI" id="CHEBI:59874"/>
        <dbReference type="ChEBI" id="CHEBI:78442"/>
        <dbReference type="ChEBI" id="CHEBI:138191"/>
        <dbReference type="EC" id="3.1.1.29"/>
    </reaction>
</comment>
<comment type="subunit">
    <text evidence="1">Monomer.</text>
</comment>
<comment type="subcellular location">
    <subcellularLocation>
        <location evidence="1">Cytoplasm</location>
    </subcellularLocation>
</comment>
<comment type="similarity">
    <text evidence="1">Belongs to the PTH family.</text>
</comment>
<protein>
    <recommendedName>
        <fullName evidence="1">Peptidyl-tRNA hydrolase</fullName>
        <shortName evidence="1">Pth</shortName>
        <ecNumber evidence="1">3.1.1.29</ecNumber>
    </recommendedName>
</protein>
<organism>
    <name type="scientific">Akkermansia muciniphila (strain ATCC BAA-835 / DSM 22959 / JCM 33894 / BCRC 81048 / CCUG 64013 / CIP 107961 / Muc)</name>
    <dbReference type="NCBI Taxonomy" id="349741"/>
    <lineage>
        <taxon>Bacteria</taxon>
        <taxon>Pseudomonadati</taxon>
        <taxon>Verrucomicrobiota</taxon>
        <taxon>Verrucomicrobiia</taxon>
        <taxon>Verrucomicrobiales</taxon>
        <taxon>Akkermansiaceae</taxon>
        <taxon>Akkermansia</taxon>
    </lineage>
</organism>
<reference key="1">
    <citation type="journal article" date="2011" name="PLoS ONE">
        <title>The genome of Akkermansia muciniphila, a dedicated intestinal mucin degrader, and its use in exploring intestinal metagenomes.</title>
        <authorList>
            <person name="van Passel M.W."/>
            <person name="Kant R."/>
            <person name="Zoetendal E.G."/>
            <person name="Plugge C.M."/>
            <person name="Derrien M."/>
            <person name="Malfatti S.A."/>
            <person name="Chain P.S."/>
            <person name="Woyke T."/>
            <person name="Palva A."/>
            <person name="de Vos W.M."/>
            <person name="Smidt H."/>
        </authorList>
    </citation>
    <scope>NUCLEOTIDE SEQUENCE [LARGE SCALE GENOMIC DNA]</scope>
    <source>
        <strain>ATCC BAA-835 / DSM 22959 / JCM 33894 / BCRC 81048 / CCUG 64013 / CIP 107961 / Muc</strain>
    </source>
</reference>
<dbReference type="EC" id="3.1.1.29" evidence="1"/>
<dbReference type="EMBL" id="CP001071">
    <property type="protein sequence ID" value="ACD05930.1"/>
    <property type="molecule type" value="Genomic_DNA"/>
</dbReference>
<dbReference type="SMR" id="B2UPQ2"/>
<dbReference type="STRING" id="349741.Amuc_2121"/>
<dbReference type="PaxDb" id="349741-Amuc_2121"/>
<dbReference type="KEGG" id="amu:Amuc_2121"/>
<dbReference type="eggNOG" id="COG0193">
    <property type="taxonomic scope" value="Bacteria"/>
</dbReference>
<dbReference type="HOGENOM" id="CLU_062456_4_1_0"/>
<dbReference type="OrthoDB" id="9800507at2"/>
<dbReference type="BioCyc" id="AMUC349741:G1GBX-2263-MONOMER"/>
<dbReference type="Proteomes" id="UP000001031">
    <property type="component" value="Chromosome"/>
</dbReference>
<dbReference type="GO" id="GO:0005737">
    <property type="term" value="C:cytoplasm"/>
    <property type="evidence" value="ECO:0007669"/>
    <property type="project" value="UniProtKB-SubCell"/>
</dbReference>
<dbReference type="GO" id="GO:0004045">
    <property type="term" value="F:peptidyl-tRNA hydrolase activity"/>
    <property type="evidence" value="ECO:0007669"/>
    <property type="project" value="UniProtKB-UniRule"/>
</dbReference>
<dbReference type="GO" id="GO:0000049">
    <property type="term" value="F:tRNA binding"/>
    <property type="evidence" value="ECO:0007669"/>
    <property type="project" value="UniProtKB-UniRule"/>
</dbReference>
<dbReference type="GO" id="GO:0006515">
    <property type="term" value="P:protein quality control for misfolded or incompletely synthesized proteins"/>
    <property type="evidence" value="ECO:0007669"/>
    <property type="project" value="UniProtKB-UniRule"/>
</dbReference>
<dbReference type="GO" id="GO:0072344">
    <property type="term" value="P:rescue of stalled ribosome"/>
    <property type="evidence" value="ECO:0007669"/>
    <property type="project" value="UniProtKB-UniRule"/>
</dbReference>
<dbReference type="CDD" id="cd00462">
    <property type="entry name" value="PTH"/>
    <property type="match status" value="1"/>
</dbReference>
<dbReference type="FunFam" id="3.40.50.1470:FF:000001">
    <property type="entry name" value="Peptidyl-tRNA hydrolase"/>
    <property type="match status" value="1"/>
</dbReference>
<dbReference type="Gene3D" id="3.40.50.1470">
    <property type="entry name" value="Peptidyl-tRNA hydrolase"/>
    <property type="match status" value="1"/>
</dbReference>
<dbReference type="HAMAP" id="MF_00083">
    <property type="entry name" value="Pept_tRNA_hydro_bact"/>
    <property type="match status" value="1"/>
</dbReference>
<dbReference type="InterPro" id="IPR001328">
    <property type="entry name" value="Pept_tRNA_hydro"/>
</dbReference>
<dbReference type="InterPro" id="IPR018171">
    <property type="entry name" value="Pept_tRNA_hydro_CS"/>
</dbReference>
<dbReference type="InterPro" id="IPR036416">
    <property type="entry name" value="Pept_tRNA_hydro_sf"/>
</dbReference>
<dbReference type="NCBIfam" id="TIGR00447">
    <property type="entry name" value="pth"/>
    <property type="match status" value="1"/>
</dbReference>
<dbReference type="PANTHER" id="PTHR17224">
    <property type="entry name" value="PEPTIDYL-TRNA HYDROLASE"/>
    <property type="match status" value="1"/>
</dbReference>
<dbReference type="PANTHER" id="PTHR17224:SF1">
    <property type="entry name" value="PEPTIDYL-TRNA HYDROLASE"/>
    <property type="match status" value="1"/>
</dbReference>
<dbReference type="Pfam" id="PF01195">
    <property type="entry name" value="Pept_tRNA_hydro"/>
    <property type="match status" value="1"/>
</dbReference>
<dbReference type="SUPFAM" id="SSF53178">
    <property type="entry name" value="Peptidyl-tRNA hydrolase-like"/>
    <property type="match status" value="1"/>
</dbReference>
<dbReference type="PROSITE" id="PS01195">
    <property type="entry name" value="PEPT_TRNA_HYDROL_1"/>
    <property type="match status" value="1"/>
</dbReference>
<dbReference type="PROSITE" id="PS01196">
    <property type="entry name" value="PEPT_TRNA_HYDROL_2"/>
    <property type="match status" value="1"/>
</dbReference>
<feature type="chain" id="PRO_1000092903" description="Peptidyl-tRNA hydrolase">
    <location>
        <begin position="1"/>
        <end position="190"/>
    </location>
</feature>
<feature type="active site" description="Proton acceptor" evidence="1">
    <location>
        <position position="23"/>
    </location>
</feature>
<feature type="binding site" evidence="1">
    <location>
        <position position="18"/>
    </location>
    <ligand>
        <name>tRNA</name>
        <dbReference type="ChEBI" id="CHEBI:17843"/>
    </ligand>
</feature>
<feature type="binding site" evidence="1">
    <location>
        <position position="65"/>
    </location>
    <ligand>
        <name>tRNA</name>
        <dbReference type="ChEBI" id="CHEBI:17843"/>
    </ligand>
</feature>
<feature type="binding site" evidence="1">
    <location>
        <position position="67"/>
    </location>
    <ligand>
        <name>tRNA</name>
        <dbReference type="ChEBI" id="CHEBI:17843"/>
    </ligand>
</feature>
<feature type="binding site" evidence="1">
    <location>
        <position position="113"/>
    </location>
    <ligand>
        <name>tRNA</name>
        <dbReference type="ChEBI" id="CHEBI:17843"/>
    </ligand>
</feature>
<feature type="site" description="Discriminates between blocked and unblocked aminoacyl-tRNA" evidence="1">
    <location>
        <position position="13"/>
    </location>
</feature>
<feature type="site" description="Stabilizes the basic form of H active site to accept a proton" evidence="1">
    <location>
        <position position="92"/>
    </location>
</feature>
<accession>B2UPQ2</accession>
<gene>
    <name evidence="1" type="primary">pth</name>
    <name type="ordered locus">Amuc_2121</name>
</gene>
<proteinExistence type="inferred from homology"/>
<sequence>MDAPVKMIVGLGNPGRTYEDTRHNAGFMVLDRLAARWGAVFKADRQRKCEVAAGPGVLLVKPSTFMNESGLCVGPMMRFFKLDPRSVFVIHDEVDFPLGVIKLREKGSAGGHNGIKSLIAHMGTQEFPRLRFGIGQPRGKGEMIGHVLGKFRPEERELLDVTLGKAEDAVLYTMEHGITRAGNIFNAVPG</sequence>